<evidence type="ECO:0000250" key="1"/>
<evidence type="ECO:0000255" key="2"/>
<evidence type="ECO:0000255" key="3">
    <source>
        <dbReference type="PROSITE-ProRule" id="PRU00532"/>
    </source>
</evidence>
<evidence type="ECO:0000256" key="4">
    <source>
        <dbReference type="SAM" id="MobiDB-lite"/>
    </source>
</evidence>
<evidence type="ECO:0000305" key="5"/>
<sequence length="734" mass="81144">MLLQNLALKKGKEAAGHNIQSLTKHGNYFVQSSDRRRAYTSNQSAADKVREELAKETCEKLSSQHQAKKKAKAIDRDFFLSVLGSSATKREARSYIQNFKPLNTSPAKPISQEPVHKNTNENGANLGSIYTATRAVAESPKFVQQPAVSQSTLGGSILHVALVKVRAPQLLDDETLNGIGKTLSKLCRLGLISTVVVDCEDGTDTHLKVSECEWRNRIKEQAARVVTAIDASGTEARLVDNVIGIAEDGSDVKQQPYLKGGVHVTFRELLMTPLRRGVLPVLPSIGHTDATQTAVSITASDVVLALTREFAGFRSPQSPDEHPNVVKEHLQALQNEVSLDRLILIDPLGGIPASDRRNGYHVFLNMEQEYEQAKQDLIKTGGLYSETSSRSTRAEADSNFNLRDDIPLSSFTEQKSGELEYSPRHQNDSPTQQDQRMKFHLDNLELVRSALAILPPSSSALVTTPDEAANSGKQHEFKAAGVGTRRQRNPLIHNLLTDKPAFSSSLPAGRLGPLDKNEPITPSTKLAPATFAKHGMPVTIFPDPKTTPWQPPIAGVPQISLTDPQIDLPRLVHLIEDSFNKKLDVQDYLRRVNNRIAGVIIAGEYEGGALLTWELPPGVPDDGSEESRKRMVPYLDKFAVLKRSQGSGGVADVVFKSMVRDCFPGGVCWRSRKDNPVNKWYFERSRATLKLMDTNWTMFFTTPEENMDQQTFQDYEAVCKTIEPSWADKQGVQD</sequence>
<dbReference type="EC" id="2.3.1.1"/>
<dbReference type="EMBL" id="CP009819">
    <property type="protein sequence ID" value="ATZ58087.1"/>
    <property type="molecule type" value="Genomic_DNA"/>
</dbReference>
<dbReference type="SMR" id="A6SG85"/>
<dbReference type="EnsemblFungi" id="Bcin15g05430.1">
    <property type="protein sequence ID" value="Bcin15p05430.1"/>
    <property type="gene ID" value="Bcin15g05430"/>
</dbReference>
<dbReference type="GeneID" id="5430240"/>
<dbReference type="KEGG" id="bfu:BCIN_15g05430"/>
<dbReference type="VEuPathDB" id="FungiDB:Bcin15g05430"/>
<dbReference type="OMA" id="NAMVRDC"/>
<dbReference type="OrthoDB" id="5585968at2759"/>
<dbReference type="UniPathway" id="UPA00068">
    <property type="reaction ID" value="UER00106"/>
</dbReference>
<dbReference type="Proteomes" id="UP000001798">
    <property type="component" value="Chromosome bcin15"/>
</dbReference>
<dbReference type="GO" id="GO:0005759">
    <property type="term" value="C:mitochondrial matrix"/>
    <property type="evidence" value="ECO:0007669"/>
    <property type="project" value="TreeGrafter"/>
</dbReference>
<dbReference type="GO" id="GO:0004042">
    <property type="term" value="F:L-glutamate N-acetyltransferase activity"/>
    <property type="evidence" value="ECO:0007669"/>
    <property type="project" value="InterPro"/>
</dbReference>
<dbReference type="GO" id="GO:0006526">
    <property type="term" value="P:L-arginine biosynthetic process"/>
    <property type="evidence" value="ECO:0007669"/>
    <property type="project" value="UniProtKB-UniPathway"/>
</dbReference>
<dbReference type="GO" id="GO:0006592">
    <property type="term" value="P:ornithine biosynthetic process"/>
    <property type="evidence" value="ECO:0007669"/>
    <property type="project" value="TreeGrafter"/>
</dbReference>
<dbReference type="FunFam" id="3.40.630.30:FF:000049">
    <property type="entry name" value="Amino-acid acetyltransferase, mitochondrial"/>
    <property type="match status" value="1"/>
</dbReference>
<dbReference type="Gene3D" id="3.40.630.30">
    <property type="match status" value="1"/>
</dbReference>
<dbReference type="Gene3D" id="3.40.1160.10">
    <property type="entry name" value="Acetylglutamate kinase-like"/>
    <property type="match status" value="1"/>
</dbReference>
<dbReference type="InterPro" id="IPR036393">
    <property type="entry name" value="AceGlu_kinase-like_sf"/>
</dbReference>
<dbReference type="InterPro" id="IPR011190">
    <property type="entry name" value="GlcNAc_Synth_fun"/>
</dbReference>
<dbReference type="InterPro" id="IPR006855">
    <property type="entry name" value="Vertebrate-like_GNAT_dom"/>
</dbReference>
<dbReference type="PANTHER" id="PTHR23342:SF4">
    <property type="entry name" value="AMINO-ACID ACETYLTRANSFERASE, MITOCHONDRIAL"/>
    <property type="match status" value="1"/>
</dbReference>
<dbReference type="PANTHER" id="PTHR23342">
    <property type="entry name" value="N-ACETYLGLUTAMATE SYNTHASE"/>
    <property type="match status" value="1"/>
</dbReference>
<dbReference type="Pfam" id="PF04768">
    <property type="entry name" value="NAT"/>
    <property type="match status" value="1"/>
</dbReference>
<dbReference type="PIRSF" id="PIRSF007892">
    <property type="entry name" value="NAGS_fungal"/>
    <property type="match status" value="1"/>
</dbReference>
<dbReference type="PROSITE" id="PS51731">
    <property type="entry name" value="GNAT_NAGS"/>
    <property type="match status" value="1"/>
</dbReference>
<proteinExistence type="inferred from homology"/>
<reference key="1">
    <citation type="journal article" date="2011" name="PLoS Genet.">
        <title>Genomic analysis of the necrotrophic fungal pathogens Sclerotinia sclerotiorum and Botrytis cinerea.</title>
        <authorList>
            <person name="Amselem J."/>
            <person name="Cuomo C.A."/>
            <person name="van Kan J.A.L."/>
            <person name="Viaud M."/>
            <person name="Benito E.P."/>
            <person name="Couloux A."/>
            <person name="Coutinho P.M."/>
            <person name="de Vries R.P."/>
            <person name="Dyer P.S."/>
            <person name="Fillinger S."/>
            <person name="Fournier E."/>
            <person name="Gout L."/>
            <person name="Hahn M."/>
            <person name="Kohn L."/>
            <person name="Lapalu N."/>
            <person name="Plummer K.M."/>
            <person name="Pradier J.-M."/>
            <person name="Quevillon E."/>
            <person name="Sharon A."/>
            <person name="Simon A."/>
            <person name="ten Have A."/>
            <person name="Tudzynski B."/>
            <person name="Tudzynski P."/>
            <person name="Wincker P."/>
            <person name="Andrew M."/>
            <person name="Anthouard V."/>
            <person name="Beever R.E."/>
            <person name="Beffa R."/>
            <person name="Benoit I."/>
            <person name="Bouzid O."/>
            <person name="Brault B."/>
            <person name="Chen Z."/>
            <person name="Choquer M."/>
            <person name="Collemare J."/>
            <person name="Cotton P."/>
            <person name="Danchin E.G."/>
            <person name="Da Silva C."/>
            <person name="Gautier A."/>
            <person name="Giraud C."/>
            <person name="Giraud T."/>
            <person name="Gonzalez C."/>
            <person name="Grossetete S."/>
            <person name="Gueldener U."/>
            <person name="Henrissat B."/>
            <person name="Howlett B.J."/>
            <person name="Kodira C."/>
            <person name="Kretschmer M."/>
            <person name="Lappartient A."/>
            <person name="Leroch M."/>
            <person name="Levis C."/>
            <person name="Mauceli E."/>
            <person name="Neuveglise C."/>
            <person name="Oeser B."/>
            <person name="Pearson M."/>
            <person name="Poulain J."/>
            <person name="Poussereau N."/>
            <person name="Quesneville H."/>
            <person name="Rascle C."/>
            <person name="Schumacher J."/>
            <person name="Segurens B."/>
            <person name="Sexton A."/>
            <person name="Silva E."/>
            <person name="Sirven C."/>
            <person name="Soanes D.M."/>
            <person name="Talbot N.J."/>
            <person name="Templeton M."/>
            <person name="Yandava C."/>
            <person name="Yarden O."/>
            <person name="Zeng Q."/>
            <person name="Rollins J.A."/>
            <person name="Lebrun M.-H."/>
            <person name="Dickman M."/>
        </authorList>
    </citation>
    <scope>NUCLEOTIDE SEQUENCE [LARGE SCALE GENOMIC DNA]</scope>
    <source>
        <strain>B05.10</strain>
    </source>
</reference>
<reference key="2">
    <citation type="journal article" date="2012" name="Eukaryot. Cell">
        <title>Genome update of Botrytis cinerea strains B05.10 and T4.</title>
        <authorList>
            <person name="Staats M."/>
            <person name="van Kan J.A.L."/>
        </authorList>
    </citation>
    <scope>NUCLEOTIDE SEQUENCE [LARGE SCALE GENOMIC DNA]</scope>
    <scope>GENOME REANNOTATION</scope>
    <source>
        <strain>B05.10</strain>
    </source>
</reference>
<reference key="3">
    <citation type="journal article" date="2017" name="Mol. Plant Pathol.">
        <title>A gapless genome sequence of the fungus Botrytis cinerea.</title>
        <authorList>
            <person name="van Kan J.A.L."/>
            <person name="Stassen J.H.M."/>
            <person name="Mosbach A."/>
            <person name="van der Lee T.A.J."/>
            <person name="Faino L."/>
            <person name="Farmer A.D."/>
            <person name="Papasotiriou D.G."/>
            <person name="Zhou S."/>
            <person name="Seidl M.F."/>
            <person name="Cottam E."/>
            <person name="Edel D."/>
            <person name="Hahn M."/>
            <person name="Schwartz D.C."/>
            <person name="Dietrich R.A."/>
            <person name="Widdison S."/>
            <person name="Scalliet G."/>
        </authorList>
    </citation>
    <scope>NUCLEOTIDE SEQUENCE [LARGE SCALE GENOMIC DNA]</scope>
    <scope>GENOME REANNOTATION</scope>
    <source>
        <strain>B05.10</strain>
    </source>
</reference>
<comment type="function">
    <text evidence="1">N-acetylglutamate synthase involved in arginine biosynthesis.</text>
</comment>
<comment type="catalytic activity">
    <reaction>
        <text>L-glutamate + acetyl-CoA = N-acetyl-L-glutamate + CoA + H(+)</text>
        <dbReference type="Rhea" id="RHEA:24292"/>
        <dbReference type="ChEBI" id="CHEBI:15378"/>
        <dbReference type="ChEBI" id="CHEBI:29985"/>
        <dbReference type="ChEBI" id="CHEBI:44337"/>
        <dbReference type="ChEBI" id="CHEBI:57287"/>
        <dbReference type="ChEBI" id="CHEBI:57288"/>
        <dbReference type="EC" id="2.3.1.1"/>
    </reaction>
</comment>
<comment type="pathway">
    <text>Amino-acid biosynthesis; L-arginine biosynthesis; N(2)-acetyl-L-ornithine from L-glutamate: step 1/4.</text>
</comment>
<comment type="subcellular location">
    <subcellularLocation>
        <location evidence="1">Mitochondrion</location>
    </subcellularLocation>
</comment>
<comment type="similarity">
    <text evidence="5">Belongs to the acetyltransferase family.</text>
</comment>
<organism>
    <name type="scientific">Botryotinia fuckeliana (strain B05.10)</name>
    <name type="common">Noble rot fungus</name>
    <name type="synonym">Botrytis cinerea</name>
    <dbReference type="NCBI Taxonomy" id="332648"/>
    <lineage>
        <taxon>Eukaryota</taxon>
        <taxon>Fungi</taxon>
        <taxon>Dikarya</taxon>
        <taxon>Ascomycota</taxon>
        <taxon>Pezizomycotina</taxon>
        <taxon>Leotiomycetes</taxon>
        <taxon>Helotiales</taxon>
        <taxon>Sclerotiniaceae</taxon>
        <taxon>Botrytis</taxon>
    </lineage>
</organism>
<gene>
    <name type="primary">arg2</name>
    <name type="ORF">BC1G_11576</name>
    <name type="ORF">BCIN_15g05430</name>
</gene>
<keyword id="KW-0012">Acyltransferase</keyword>
<keyword id="KW-0028">Amino-acid biosynthesis</keyword>
<keyword id="KW-0496">Mitochondrion</keyword>
<keyword id="KW-1185">Reference proteome</keyword>
<keyword id="KW-0808">Transferase</keyword>
<keyword id="KW-0809">Transit peptide</keyword>
<feature type="transit peptide" description="Mitochondrion" evidence="2">
    <location>
        <begin position="1"/>
        <end status="unknown"/>
    </location>
</feature>
<feature type="chain" id="PRO_0000372555" description="Amino-acid acetyltransferase, mitochondrial">
    <location>
        <begin status="unknown"/>
        <end position="734"/>
    </location>
</feature>
<feature type="domain" description="N-acetyltransferase" evidence="3">
    <location>
        <begin position="555"/>
        <end position="724"/>
    </location>
</feature>
<feature type="region of interest" description="Disordered" evidence="4">
    <location>
        <begin position="384"/>
        <end position="433"/>
    </location>
</feature>
<feature type="compositionally biased region" description="Basic and acidic residues" evidence="4">
    <location>
        <begin position="392"/>
        <end position="406"/>
    </location>
</feature>
<feature type="compositionally biased region" description="Basic and acidic residues" evidence="4">
    <location>
        <begin position="415"/>
        <end position="427"/>
    </location>
</feature>
<protein>
    <recommendedName>
        <fullName>Amino-acid acetyltransferase, mitochondrial</fullName>
        <ecNumber>2.3.1.1</ecNumber>
    </recommendedName>
    <alternativeName>
        <fullName>Arginine-requiring protein 2</fullName>
    </alternativeName>
    <alternativeName>
        <fullName>Glutamate N-acetyltransferase</fullName>
    </alternativeName>
    <alternativeName>
        <fullName>N-acetylglutamate synthase</fullName>
        <shortName>AGS</shortName>
        <shortName>NAGS</shortName>
    </alternativeName>
</protein>
<accession>A6SG85</accession>
<accession>A0A384K6C3</accession>
<name>NAGS_BOTFB</name>